<keyword id="KW-0067">ATP-binding</keyword>
<keyword id="KW-1003">Cell membrane</keyword>
<keyword id="KW-0460">Magnesium</keyword>
<keyword id="KW-0464">Manganese</keyword>
<keyword id="KW-0472">Membrane</keyword>
<keyword id="KW-0479">Metal-binding</keyword>
<keyword id="KW-0547">Nucleotide-binding</keyword>
<keyword id="KW-0597">Phosphoprotein</keyword>
<keyword id="KW-1185">Reference proteome</keyword>
<keyword id="KW-1278">Translocase</keyword>
<keyword id="KW-0812">Transmembrane</keyword>
<keyword id="KW-1133">Transmembrane helix</keyword>
<protein>
    <recommendedName>
        <fullName evidence="1">Manganese-exporting P-type ATPase</fullName>
        <ecNumber evidence="1">7.2.2.22</ecNumber>
    </recommendedName>
</protein>
<dbReference type="EC" id="7.2.2.22" evidence="1"/>
<dbReference type="EMBL" id="LT708304">
    <property type="protein sequence ID" value="SIU01927.1"/>
    <property type="molecule type" value="Genomic_DNA"/>
</dbReference>
<dbReference type="RefSeq" id="NP_856943.1">
    <property type="nucleotide sequence ID" value="NC_002945.3"/>
</dbReference>
<dbReference type="RefSeq" id="WP_003899995.1">
    <property type="nucleotide sequence ID" value="NC_002945.4"/>
</dbReference>
<dbReference type="SMR" id="P0A503"/>
<dbReference type="KEGG" id="mbo:BQ2027_MB3298"/>
<dbReference type="PATRIC" id="fig|233413.5.peg.3627"/>
<dbReference type="Proteomes" id="UP000001419">
    <property type="component" value="Chromosome"/>
</dbReference>
<dbReference type="GO" id="GO:0005886">
    <property type="term" value="C:plasma membrane"/>
    <property type="evidence" value="ECO:0007669"/>
    <property type="project" value="UniProtKB-SubCell"/>
</dbReference>
<dbReference type="GO" id="GO:0005524">
    <property type="term" value="F:ATP binding"/>
    <property type="evidence" value="ECO:0007669"/>
    <property type="project" value="UniProtKB-KW"/>
</dbReference>
<dbReference type="GO" id="GO:0016887">
    <property type="term" value="F:ATP hydrolysis activity"/>
    <property type="evidence" value="ECO:0007669"/>
    <property type="project" value="InterPro"/>
</dbReference>
<dbReference type="GO" id="GO:0005507">
    <property type="term" value="F:copper ion binding"/>
    <property type="evidence" value="ECO:0007669"/>
    <property type="project" value="TreeGrafter"/>
</dbReference>
<dbReference type="GO" id="GO:0043682">
    <property type="term" value="F:P-type divalent copper transporter activity"/>
    <property type="evidence" value="ECO:0007669"/>
    <property type="project" value="TreeGrafter"/>
</dbReference>
<dbReference type="GO" id="GO:0140613">
    <property type="term" value="F:P-type manganese transporter activity"/>
    <property type="evidence" value="ECO:0007669"/>
    <property type="project" value="RHEA"/>
</dbReference>
<dbReference type="GO" id="GO:0055070">
    <property type="term" value="P:copper ion homeostasis"/>
    <property type="evidence" value="ECO:0007669"/>
    <property type="project" value="TreeGrafter"/>
</dbReference>
<dbReference type="CDD" id="cd02079">
    <property type="entry name" value="P-type_ATPase_HM"/>
    <property type="match status" value="1"/>
</dbReference>
<dbReference type="FunFam" id="3.40.1110.10:FF:000052">
    <property type="entry name" value="Copper-translocating P-type ATPase"/>
    <property type="match status" value="1"/>
</dbReference>
<dbReference type="Gene3D" id="3.40.1110.10">
    <property type="entry name" value="Calcium-transporting ATPase, cytoplasmic domain N"/>
    <property type="match status" value="1"/>
</dbReference>
<dbReference type="Gene3D" id="2.70.150.10">
    <property type="entry name" value="Calcium-transporting ATPase, cytoplasmic transduction domain A"/>
    <property type="match status" value="1"/>
</dbReference>
<dbReference type="Gene3D" id="3.40.50.1000">
    <property type="entry name" value="HAD superfamily/HAD-like"/>
    <property type="match status" value="1"/>
</dbReference>
<dbReference type="InterPro" id="IPR023299">
    <property type="entry name" value="ATPase_P-typ_cyto_dom_N"/>
</dbReference>
<dbReference type="InterPro" id="IPR018303">
    <property type="entry name" value="ATPase_P-typ_P_site"/>
</dbReference>
<dbReference type="InterPro" id="IPR023298">
    <property type="entry name" value="ATPase_P-typ_TM_dom_sf"/>
</dbReference>
<dbReference type="InterPro" id="IPR008250">
    <property type="entry name" value="ATPase_P-typ_transduc_dom_A_sf"/>
</dbReference>
<dbReference type="InterPro" id="IPR036412">
    <property type="entry name" value="HAD-like_sf"/>
</dbReference>
<dbReference type="InterPro" id="IPR023214">
    <property type="entry name" value="HAD_sf"/>
</dbReference>
<dbReference type="InterPro" id="IPR006121">
    <property type="entry name" value="HMA_dom"/>
</dbReference>
<dbReference type="InterPro" id="IPR027256">
    <property type="entry name" value="P-typ_ATPase_IB"/>
</dbReference>
<dbReference type="InterPro" id="IPR001757">
    <property type="entry name" value="P_typ_ATPase"/>
</dbReference>
<dbReference type="InterPro" id="IPR044492">
    <property type="entry name" value="P_typ_ATPase_HD_dom"/>
</dbReference>
<dbReference type="NCBIfam" id="TIGR01511">
    <property type="entry name" value="ATPase-IB1_Cu"/>
    <property type="match status" value="1"/>
</dbReference>
<dbReference type="NCBIfam" id="TIGR01525">
    <property type="entry name" value="ATPase-IB_hvy"/>
    <property type="match status" value="1"/>
</dbReference>
<dbReference type="NCBIfam" id="TIGR01494">
    <property type="entry name" value="ATPase_P-type"/>
    <property type="match status" value="1"/>
</dbReference>
<dbReference type="PANTHER" id="PTHR43520">
    <property type="entry name" value="ATP7, ISOFORM B"/>
    <property type="match status" value="1"/>
</dbReference>
<dbReference type="PANTHER" id="PTHR43520:SF8">
    <property type="entry name" value="P-TYPE CU(+) TRANSPORTER"/>
    <property type="match status" value="1"/>
</dbReference>
<dbReference type="Pfam" id="PF00122">
    <property type="entry name" value="E1-E2_ATPase"/>
    <property type="match status" value="1"/>
</dbReference>
<dbReference type="Pfam" id="PF00702">
    <property type="entry name" value="Hydrolase"/>
    <property type="match status" value="1"/>
</dbReference>
<dbReference type="PRINTS" id="PR00119">
    <property type="entry name" value="CATATPASE"/>
</dbReference>
<dbReference type="SFLD" id="SFLDG00002">
    <property type="entry name" value="C1.7:_P-type_atpase_like"/>
    <property type="match status" value="1"/>
</dbReference>
<dbReference type="SFLD" id="SFLDF00027">
    <property type="entry name" value="p-type_atpase"/>
    <property type="match status" value="1"/>
</dbReference>
<dbReference type="SUPFAM" id="SSF81653">
    <property type="entry name" value="Calcium ATPase, transduction domain A"/>
    <property type="match status" value="1"/>
</dbReference>
<dbReference type="SUPFAM" id="SSF81665">
    <property type="entry name" value="Calcium ATPase, transmembrane domain M"/>
    <property type="match status" value="1"/>
</dbReference>
<dbReference type="SUPFAM" id="SSF56784">
    <property type="entry name" value="HAD-like"/>
    <property type="match status" value="1"/>
</dbReference>
<dbReference type="PROSITE" id="PS00154">
    <property type="entry name" value="ATPASE_E1_E2"/>
    <property type="match status" value="1"/>
</dbReference>
<dbReference type="PROSITE" id="PS50846">
    <property type="entry name" value="HMA_2"/>
    <property type="match status" value="1"/>
</dbReference>
<gene>
    <name type="primary">ctpC</name>
    <name type="synonym">mtaA</name>
    <name type="ordered locus">BQ2027_MB3298</name>
</gene>
<proteinExistence type="inferred from homology"/>
<organism>
    <name type="scientific">Mycobacterium bovis (strain ATCC BAA-935 / AF2122/97)</name>
    <dbReference type="NCBI Taxonomy" id="233413"/>
    <lineage>
        <taxon>Bacteria</taxon>
        <taxon>Bacillati</taxon>
        <taxon>Actinomycetota</taxon>
        <taxon>Actinomycetes</taxon>
        <taxon>Mycobacteriales</taxon>
        <taxon>Mycobacteriaceae</taxon>
        <taxon>Mycobacterium</taxon>
        <taxon>Mycobacterium tuberculosis complex</taxon>
    </lineage>
</organism>
<evidence type="ECO:0000250" key="1">
    <source>
        <dbReference type="UniProtKB" id="P9WPT5"/>
    </source>
</evidence>
<evidence type="ECO:0000250" key="2">
    <source>
        <dbReference type="UniProtKB" id="Q5ZWR1"/>
    </source>
</evidence>
<evidence type="ECO:0000255" key="3">
    <source>
        <dbReference type="PROSITE-ProRule" id="PRU00280"/>
    </source>
</evidence>
<evidence type="ECO:0000305" key="4"/>
<reference key="1">
    <citation type="journal article" date="2003" name="Proc. Natl. Acad. Sci. U.S.A.">
        <title>The complete genome sequence of Mycobacterium bovis.</title>
        <authorList>
            <person name="Garnier T."/>
            <person name="Eiglmeier K."/>
            <person name="Camus J.-C."/>
            <person name="Medina N."/>
            <person name="Mansoor H."/>
            <person name="Pryor M."/>
            <person name="Duthoy S."/>
            <person name="Grondin S."/>
            <person name="Lacroix C."/>
            <person name="Monsempe C."/>
            <person name="Simon S."/>
            <person name="Harris B."/>
            <person name="Atkin R."/>
            <person name="Doggett J."/>
            <person name="Mayes R."/>
            <person name="Keating L."/>
            <person name="Wheeler P.R."/>
            <person name="Parkhill J."/>
            <person name="Barrell B.G."/>
            <person name="Cole S.T."/>
            <person name="Gordon S.V."/>
            <person name="Hewinson R.G."/>
        </authorList>
    </citation>
    <scope>NUCLEOTIDE SEQUENCE [LARGE SCALE GENOMIC DNA]</scope>
    <source>
        <strain>ATCC BAA-935 / AF2122/97</strain>
    </source>
</reference>
<reference key="2">
    <citation type="journal article" date="2017" name="Genome Announc.">
        <title>Updated reference genome sequence and annotation of Mycobacterium bovis AF2122/97.</title>
        <authorList>
            <person name="Malone K.M."/>
            <person name="Farrell D."/>
            <person name="Stuber T.P."/>
            <person name="Schubert O.T."/>
            <person name="Aebersold R."/>
            <person name="Robbe-Austerman S."/>
            <person name="Gordon S.V."/>
        </authorList>
    </citation>
    <scope>NUCLEOTIDE SEQUENCE [LARGE SCALE GENOMIC DNA]</scope>
    <scope>GENOME REANNOTATION</scope>
    <source>
        <strain>ATCC BAA-935 / AF2122/97</strain>
    </source>
</reference>
<feature type="chain" id="PRO_0000046335" description="Manganese-exporting P-type ATPase">
    <location>
        <begin position="1"/>
        <end position="718"/>
    </location>
</feature>
<feature type="transmembrane region" description="Helical" evidence="1">
    <location>
        <begin position="87"/>
        <end position="105"/>
    </location>
</feature>
<feature type="transmembrane region" description="Helical" evidence="1">
    <location>
        <begin position="128"/>
        <end position="146"/>
    </location>
</feature>
<feature type="transmembrane region" description="Helical" evidence="1">
    <location>
        <begin position="154"/>
        <end position="168"/>
    </location>
</feature>
<feature type="transmembrane region" description="Helical" evidence="1">
    <location>
        <begin position="177"/>
        <end position="191"/>
    </location>
</feature>
<feature type="transmembrane region" description="Helical" evidence="1">
    <location>
        <begin position="327"/>
        <end position="351"/>
    </location>
</feature>
<feature type="transmembrane region" description="Helical" evidence="1">
    <location>
        <begin position="357"/>
        <end position="375"/>
    </location>
</feature>
<feature type="transmembrane region" description="Helical" evidence="1">
    <location>
        <begin position="661"/>
        <end position="680"/>
    </location>
</feature>
<feature type="transmembrane region" description="Helical" evidence="1">
    <location>
        <begin position="690"/>
        <end position="709"/>
    </location>
</feature>
<feature type="domain" description="HMA" evidence="3">
    <location>
        <begin position="11"/>
        <end position="78"/>
    </location>
</feature>
<feature type="active site" description="4-aspartylphosphate intermediate" evidence="2">
    <location>
        <position position="408"/>
    </location>
</feature>
<feature type="binding site" evidence="2">
    <location>
        <position position="408"/>
    </location>
    <ligand>
        <name>Mg(2+)</name>
        <dbReference type="ChEBI" id="CHEBI:18420"/>
    </ligand>
</feature>
<feature type="binding site" evidence="2">
    <location>
        <position position="410"/>
    </location>
    <ligand>
        <name>Mg(2+)</name>
        <dbReference type="ChEBI" id="CHEBI:18420"/>
    </ligand>
</feature>
<feature type="binding site" evidence="2">
    <location>
        <position position="610"/>
    </location>
    <ligand>
        <name>Mg(2+)</name>
        <dbReference type="ChEBI" id="CHEBI:18420"/>
    </ligand>
</feature>
<name>CTPC_MYCBO</name>
<accession>P0A503</accession>
<accession>A0A1R3Y3T1</accession>
<accession>O66027</accession>
<accession>P96875</accession>
<accession>X2BNH2</accession>
<sequence>MTLEVVSDAAGRMRVKVDWVRCDSRRAVAVEEAVAKQNGVRVVHAYPRTGSVVVWYSPRRADRAAVLAAIKGAAHVAAELIPARAPHSAEIRNTDVLRMVIGGVALALLGVRRYVFARPPLLGTTGRTVATGVTIFTGYPFLRGALRSLRSGKAGTDALVSAATVASLILRENVVALTVLWLLNIGEYLQDLTLRRTRRAISELLRGNQDTAWVRLTDPSAGSDAATEIQVPIDTVQIGDEVVVHEHVAIPVDGEVVDGEAIVNQSAITGENLPVSVVVGTRVHAGSVVVRGRVVVRAHAVGNQTTIGRIISRVEEAQLDRAPIQTVGENFSRRFVPTSFIVSAIALLITGDVRRAMTMLLIACPCAVGLSTPTAISAAIGNGARRGILIKGGSHLEQAGRVDAIVFDKTGTLTVGRPVVTNIVAMHKDWEPEQVLAYAASSEIHSRHPLAEAVIRSTEERRISIPPHEECEVLVGLGMRTWADGRTLLLGSPSLLRAEKVRVSKKASEWVDKLRRQAETPLLLAVDGTLVGLISLRDEVRPEAAQVLTKLRANGIRRIVMLTGDHPEIAQVVADELGIDEWRAEVMPEDKLAAVRELQDDGYVVGMVGDGINDAPALAAADIGIAMGLAGTDVAVETADVALANDDLHRLLDVGDLGERAVDVIRQNYGMSIAVNAAGLLIGAGGALSPVLAAILHNASSVAVVANSSRLIRYRLDR</sequence>
<comment type="function">
    <text evidence="1">High affinity, slow turnover Mn(2+) transporting ATPase.</text>
</comment>
<comment type="catalytic activity">
    <reaction evidence="1">
        <text>Mn(2+)(in) + ATP + H2O = Mn(2+)(out) + ADP + phosphate + H(+)</text>
        <dbReference type="Rhea" id="RHEA:66820"/>
        <dbReference type="ChEBI" id="CHEBI:15377"/>
        <dbReference type="ChEBI" id="CHEBI:15378"/>
        <dbReference type="ChEBI" id="CHEBI:29035"/>
        <dbReference type="ChEBI" id="CHEBI:30616"/>
        <dbReference type="ChEBI" id="CHEBI:43474"/>
        <dbReference type="ChEBI" id="CHEBI:456216"/>
        <dbReference type="EC" id="7.2.2.22"/>
    </reaction>
</comment>
<comment type="subcellular location">
    <subcellularLocation>
        <location evidence="1">Cell membrane</location>
        <topology evidence="1">Multi-pass membrane protein</topology>
    </subcellularLocation>
</comment>
<comment type="similarity">
    <text evidence="4">Belongs to the cation transport ATPase (P-type) (TC 3.A.3) family. Type IB subfamily.</text>
</comment>